<organismHost>
    <name type="scientific">Neovison vison</name>
    <name type="common">American mink</name>
    <name type="synonym">Mustela vison</name>
    <dbReference type="NCBI Taxonomy" id="452646"/>
</organismHost>
<name>CAPSD_MEVA</name>
<organism>
    <name type="scientific">Mink enteritis virus (strain Abashiri)</name>
    <name type="common">MEV</name>
    <dbReference type="NCBI Taxonomy" id="10793"/>
    <lineage>
        <taxon>Viruses</taxon>
        <taxon>Monodnaviria</taxon>
        <taxon>Shotokuvirae</taxon>
        <taxon>Cossaviricota</taxon>
        <taxon>Quintoviricetes</taxon>
        <taxon>Piccovirales</taxon>
        <taxon>Parvoviridae</taxon>
        <taxon>Parvovirinae</taxon>
        <taxon>Protoparvovirus</taxon>
        <taxon>Protoparvovirus carnivoran1</taxon>
    </lineage>
</organism>
<feature type="chain" id="PRO_0000039415" description="Capsid protein VP1">
    <location>
        <begin position="1"/>
        <end position="722"/>
    </location>
</feature>
<feature type="chain" id="PRO_0000039416" description="Capsid protein VP2">
    <location>
        <begin position="139"/>
        <end position="722"/>
    </location>
</feature>
<feature type="region of interest" description="Phospholipase A2-like" evidence="1">
    <location>
        <begin position="14"/>
        <end position="59"/>
    </location>
</feature>
<feature type="region of interest" description="Disordered" evidence="2">
    <location>
        <begin position="90"/>
        <end position="115"/>
    </location>
</feature>
<feature type="region of interest" description="Disordered" evidence="2">
    <location>
        <begin position="136"/>
        <end position="179"/>
    </location>
</feature>
<feature type="region of interest" description="Disordered" evidence="2">
    <location>
        <begin position="497"/>
        <end position="531"/>
    </location>
</feature>
<feature type="compositionally biased region" description="Gly residues" evidence="2">
    <location>
        <begin position="161"/>
        <end position="178"/>
    </location>
</feature>
<reference key="1">
    <citation type="journal article" date="1991" name="J. Gen. Virol.">
        <title>Construction and nucleotide sequence analysis of an infectious DNA clone of the autonomous parvovirus, mink enteritis virus.</title>
        <authorList>
            <person name="Kariatsumari T."/>
            <person name="Horiuchi M."/>
            <person name="Hama E."/>
            <person name="Yaguchi K."/>
            <person name="Ishigurio N."/>
            <person name="Goto H."/>
            <person name="Shinagawa M."/>
        </authorList>
    </citation>
    <scope>NUCLEOTIDE SEQUENCE [GENOMIC DNA]</scope>
</reference>
<evidence type="ECO:0000250" key="1"/>
<evidence type="ECO:0000256" key="2">
    <source>
        <dbReference type="SAM" id="MobiDB-lite"/>
    </source>
</evidence>
<evidence type="ECO:0000305" key="3"/>
<proteinExistence type="inferred from homology"/>
<comment type="function">
    <text evidence="1">Capsid protein self-assembles to form an icosahedral capsid with a T=1 symmetry, about 22 nm in diameter, and consisting of 60 copies of two size variants of the capsid proteins, VP1 and VP2, which differ by the presence of an N-terminal extension in the minor protein VP1. The capsid encapsulates the genomic ssDNA. Capsid proteins are responsible for the attachment to host cell receptors. This attachment induces virion internalization predominantly through clathrin-dependent endocytosis. Binding to the host receptors also induces capsid rearrangements leading to surface exposure of VP1 N-terminus, specifically its phospholipase A2-like region and putative nuclear localization signal(s). VP1 N-terminus might serve as a lipolytic enzyme to breach the endosomal membrane during entry into host cell and might contribute to virus transport to the nucleus (By similarity).</text>
</comment>
<comment type="subcellular location">
    <molecule>Capsid protein VP1</molecule>
    <subcellularLocation>
        <location evidence="3">Virion</location>
    </subcellularLocation>
</comment>
<comment type="subcellular location">
    <molecule>Capsid protein VP2</molecule>
    <subcellularLocation>
        <location evidence="3">Virion</location>
    </subcellularLocation>
</comment>
<comment type="domain">
    <text>The N-terminus of VP1 is sequestered within the mature capsid. It contains a phospholipase A2-like region and putative nuclear localization signals.</text>
</comment>
<comment type="similarity">
    <text evidence="3">Belongs to the parvoviridae capsid protein family.</text>
</comment>
<accession>P27437</accession>
<protein>
    <recommendedName>
        <fullName>Capsid protein VP1</fullName>
    </recommendedName>
    <alternativeName>
        <fullName>Coat protein VP1</fullName>
    </alternativeName>
    <component>
        <recommendedName>
            <fullName>Capsid protein VP2</fullName>
        </recommendedName>
        <alternativeName>
            <fullName>Coat protein VP2</fullName>
        </alternativeName>
    </component>
</protein>
<dbReference type="EMBL" id="D00765">
    <property type="protein sequence ID" value="BAA00663.1"/>
    <property type="molecule type" value="Genomic_DNA"/>
</dbReference>
<dbReference type="PIR" id="B38350">
    <property type="entry name" value="VCPVME"/>
</dbReference>
<dbReference type="SMR" id="P27437"/>
<dbReference type="Proteomes" id="UP000007717">
    <property type="component" value="Genome"/>
</dbReference>
<dbReference type="GO" id="GO:0039615">
    <property type="term" value="C:T=1 icosahedral viral capsid"/>
    <property type="evidence" value="ECO:0007669"/>
    <property type="project" value="UniProtKB-KW"/>
</dbReference>
<dbReference type="GO" id="GO:0005198">
    <property type="term" value="F:structural molecule activity"/>
    <property type="evidence" value="ECO:0007669"/>
    <property type="project" value="InterPro"/>
</dbReference>
<dbReference type="GO" id="GO:0075512">
    <property type="term" value="P:clathrin-dependent endocytosis of virus by host cell"/>
    <property type="evidence" value="ECO:0007669"/>
    <property type="project" value="UniProtKB-KW"/>
</dbReference>
<dbReference type="GO" id="GO:0140267">
    <property type="term" value="P:symbiont entry into host cell via permeabilization of host membrane"/>
    <property type="evidence" value="ECO:0007669"/>
    <property type="project" value="UniProtKB-KW"/>
</dbReference>
<dbReference type="GO" id="GO:0019062">
    <property type="term" value="P:virion attachment to host cell"/>
    <property type="evidence" value="ECO:0007669"/>
    <property type="project" value="UniProtKB-KW"/>
</dbReference>
<dbReference type="Gene3D" id="2.170.30.10">
    <property type="entry name" value="Parvovirus coat protein VP1/VP2"/>
    <property type="match status" value="1"/>
</dbReference>
<dbReference type="InterPro" id="IPR016184">
    <property type="entry name" value="Capsid/spike_ssDNA_virus"/>
</dbReference>
<dbReference type="InterPro" id="IPR001403">
    <property type="entry name" value="Parvovirus_coat"/>
</dbReference>
<dbReference type="InterPro" id="IPR013607">
    <property type="entry name" value="Phospholipase_A2-like"/>
</dbReference>
<dbReference type="InterPro" id="IPR036952">
    <property type="entry name" value="VP1/VP2"/>
</dbReference>
<dbReference type="Pfam" id="PF00740">
    <property type="entry name" value="Parvo_coat"/>
    <property type="match status" value="1"/>
</dbReference>
<dbReference type="Pfam" id="PF08398">
    <property type="entry name" value="Phospholip_A2_4"/>
    <property type="match status" value="1"/>
</dbReference>
<dbReference type="SUPFAM" id="SSF88645">
    <property type="entry name" value="ssDNA viruses"/>
    <property type="match status" value="1"/>
</dbReference>
<sequence>MCFFIGLVPPGYKYLGPGNSLDQGEPTNPSDAAAKEHDEAYAAYLRSGKNPYLYFSPADQRFIDQTKDATDWGGKIGHYFFRAKKAIAPVLTDTPDHPSTSRPTKPTKRSKPPPHIFINLAKKKKAGAGQVKRDNLAPMSDGAVQPDGGQPAVRNERATGSGNGSGGGGGGGSGGVGISTGTFNNQTEFKFLENGWVEITANSSRLVHLNMPESENYKRVVVNNMDKTAVKGNMALDDTHVQIVTPWSLVDANAWGVWFNPGDWQLIVNTMSELHLVSFEQEIFNVVLKTVSESATQPPTKVYNNDLTASLMVALDSNNTMPFTPAAMRSETLGFYPWKPTIPTPWRYYFQWDRTLIPSHTGTSGTPTNIYHGTDPDDVQFYTIENSVPVHLLRTGDEFATGTFFFDCKPCRLTHTWQTNRALGLPPFLNSLPQSEGATNFGDIGVQQDKRRGVTQMGNTDYITEATIMRPAEVGYSAPYYSFEASTQGPFKTPIAAGRGGAQTDENQAADGDPRYAFGRQHGQKTTTTGETPERFTYIAHQDTGRYPAGDWIQNINFNLPVTNDNVLLPTDPIGGKTGINYTNIFNTYGPLTALNNVPPVYPNGQIWDKEFDTDLKPRLHVNAPFVCQNNCPGQLFVKVAPNLTNEYDPDASANMSRIVTYSDFWWKGKLVFKAKLRASHTWNPIQQMSINVDNQFNYLPNNIGAMKIVYEKSQLAPRKLY</sequence>
<keyword id="KW-0167">Capsid protein</keyword>
<keyword id="KW-1165">Clathrin-mediated endocytosis of virus by host</keyword>
<keyword id="KW-0945">Host-virus interaction</keyword>
<keyword id="KW-1140">T=1 icosahedral capsid protein</keyword>
<keyword id="KW-1161">Viral attachment to host cell</keyword>
<keyword id="KW-1162">Viral penetration into host cytoplasm</keyword>
<keyword id="KW-1173">Viral penetration via permeabilization of host membrane</keyword>
<keyword id="KW-0946">Virion</keyword>
<keyword id="KW-1164">Virus endocytosis by host</keyword>
<keyword id="KW-1160">Virus entry into host cell</keyword>